<dbReference type="EC" id="3.1.1.1"/>
<dbReference type="EMBL" id="AC011807">
    <property type="protein sequence ID" value="AAG13052.1"/>
    <property type="molecule type" value="Genomic_DNA"/>
</dbReference>
<dbReference type="EMBL" id="CP002684">
    <property type="protein sequence ID" value="AEE32456.1"/>
    <property type="molecule type" value="Genomic_DNA"/>
</dbReference>
<dbReference type="EMBL" id="BT022077">
    <property type="protein sequence ID" value="AAY27064.1"/>
    <property type="molecule type" value="mRNA"/>
</dbReference>
<dbReference type="PIR" id="C96533">
    <property type="entry name" value="C96533"/>
</dbReference>
<dbReference type="RefSeq" id="NP_175389.1">
    <property type="nucleotide sequence ID" value="NM_103854.3"/>
</dbReference>
<dbReference type="SMR" id="Q9FX94"/>
<dbReference type="FunCoup" id="Q9FX94">
    <property type="interactions" value="2"/>
</dbReference>
<dbReference type="STRING" id="3702.Q9FX94"/>
<dbReference type="ESTHER" id="arath-F14J22.11">
    <property type="family name" value="Plant_carboxylesterase"/>
</dbReference>
<dbReference type="iPTMnet" id="Q9FX94"/>
<dbReference type="PaxDb" id="3702-AT1G49660.1"/>
<dbReference type="ProteomicsDB" id="220516"/>
<dbReference type="EnsemblPlants" id="AT1G49660.1">
    <property type="protein sequence ID" value="AT1G49660.1"/>
    <property type="gene ID" value="AT1G49660"/>
</dbReference>
<dbReference type="GeneID" id="841390"/>
<dbReference type="Gramene" id="AT1G49660.1">
    <property type="protein sequence ID" value="AT1G49660.1"/>
    <property type="gene ID" value="AT1G49660"/>
</dbReference>
<dbReference type="KEGG" id="ath:AT1G49660"/>
<dbReference type="Araport" id="AT1G49660"/>
<dbReference type="TAIR" id="AT1G49660">
    <property type="gene designation" value="CXE5"/>
</dbReference>
<dbReference type="eggNOG" id="KOG1515">
    <property type="taxonomic scope" value="Eukaryota"/>
</dbReference>
<dbReference type="HOGENOM" id="CLU_012494_22_0_1"/>
<dbReference type="InParanoid" id="Q9FX94"/>
<dbReference type="OMA" id="SGSEDWI"/>
<dbReference type="PhylomeDB" id="Q9FX94"/>
<dbReference type="BioCyc" id="ARA:AT1G49660-MONOMER"/>
<dbReference type="PRO" id="PR:Q9FX94"/>
<dbReference type="Proteomes" id="UP000006548">
    <property type="component" value="Chromosome 1"/>
</dbReference>
<dbReference type="ExpressionAtlas" id="Q9FX94">
    <property type="expression patterns" value="baseline and differential"/>
</dbReference>
<dbReference type="GO" id="GO:0005829">
    <property type="term" value="C:cytosol"/>
    <property type="evidence" value="ECO:0007005"/>
    <property type="project" value="TAIR"/>
</dbReference>
<dbReference type="GO" id="GO:0106435">
    <property type="term" value="F:carboxylesterase activity"/>
    <property type="evidence" value="ECO:0007669"/>
    <property type="project" value="UniProtKB-EC"/>
</dbReference>
<dbReference type="GO" id="GO:0052689">
    <property type="term" value="F:carboxylic ester hydrolase activity"/>
    <property type="evidence" value="ECO:0000314"/>
    <property type="project" value="TAIR"/>
</dbReference>
<dbReference type="FunFam" id="3.40.50.1820:FF:000376">
    <property type="entry name" value="Probable carboxylesterase 12"/>
    <property type="match status" value="1"/>
</dbReference>
<dbReference type="Gene3D" id="3.40.50.1820">
    <property type="entry name" value="alpha/beta hydrolase"/>
    <property type="match status" value="1"/>
</dbReference>
<dbReference type="InterPro" id="IPR013094">
    <property type="entry name" value="AB_hydrolase_3"/>
</dbReference>
<dbReference type="InterPro" id="IPR029058">
    <property type="entry name" value="AB_hydrolase_fold"/>
</dbReference>
<dbReference type="InterPro" id="IPR050466">
    <property type="entry name" value="Carboxylest/Gibb_receptor"/>
</dbReference>
<dbReference type="PANTHER" id="PTHR23024">
    <property type="entry name" value="ARYLACETAMIDE DEACETYLASE"/>
    <property type="match status" value="1"/>
</dbReference>
<dbReference type="PANTHER" id="PTHR23024:SF529">
    <property type="entry name" value="CARBOXYLESTERASE 5-RELATED"/>
    <property type="match status" value="1"/>
</dbReference>
<dbReference type="Pfam" id="PF07859">
    <property type="entry name" value="Abhydrolase_3"/>
    <property type="match status" value="1"/>
</dbReference>
<dbReference type="SUPFAM" id="SSF53474">
    <property type="entry name" value="alpha/beta-Hydrolases"/>
    <property type="match status" value="1"/>
</dbReference>
<name>CXE5_ARATH</name>
<keyword id="KW-0007">Acetylation</keyword>
<keyword id="KW-0378">Hydrolase</keyword>
<keyword id="KW-1185">Reference proteome</keyword>
<keyword id="KW-0719">Serine esterase</keyword>
<gene>
    <name type="primary">CXE5</name>
    <name type="ordered locus">At1g49660</name>
    <name type="ORF">F14J22.11</name>
</gene>
<protein>
    <recommendedName>
        <fullName>Probable carboxylesterase 5</fullName>
    </recommendedName>
    <alternativeName>
        <fullName>AtCXE5</fullName>
        <ecNumber>3.1.1.1</ecNumber>
    </alternativeName>
</protein>
<reference key="1">
    <citation type="journal article" date="2000" name="Nature">
        <title>Sequence and analysis of chromosome 1 of the plant Arabidopsis thaliana.</title>
        <authorList>
            <person name="Theologis A."/>
            <person name="Ecker J.R."/>
            <person name="Palm C.J."/>
            <person name="Federspiel N.A."/>
            <person name="Kaul S."/>
            <person name="White O."/>
            <person name="Alonso J."/>
            <person name="Altafi H."/>
            <person name="Araujo R."/>
            <person name="Bowman C.L."/>
            <person name="Brooks S.Y."/>
            <person name="Buehler E."/>
            <person name="Chan A."/>
            <person name="Chao Q."/>
            <person name="Chen H."/>
            <person name="Cheuk R.F."/>
            <person name="Chin C.W."/>
            <person name="Chung M.K."/>
            <person name="Conn L."/>
            <person name="Conway A.B."/>
            <person name="Conway A.R."/>
            <person name="Creasy T.H."/>
            <person name="Dewar K."/>
            <person name="Dunn P."/>
            <person name="Etgu P."/>
            <person name="Feldblyum T.V."/>
            <person name="Feng J.-D."/>
            <person name="Fong B."/>
            <person name="Fujii C.Y."/>
            <person name="Gill J.E."/>
            <person name="Goldsmith A.D."/>
            <person name="Haas B."/>
            <person name="Hansen N.F."/>
            <person name="Hughes B."/>
            <person name="Huizar L."/>
            <person name="Hunter J.L."/>
            <person name="Jenkins J."/>
            <person name="Johnson-Hopson C."/>
            <person name="Khan S."/>
            <person name="Khaykin E."/>
            <person name="Kim C.J."/>
            <person name="Koo H.L."/>
            <person name="Kremenetskaia I."/>
            <person name="Kurtz D.B."/>
            <person name="Kwan A."/>
            <person name="Lam B."/>
            <person name="Langin-Hooper S."/>
            <person name="Lee A."/>
            <person name="Lee J.M."/>
            <person name="Lenz C.A."/>
            <person name="Li J.H."/>
            <person name="Li Y.-P."/>
            <person name="Lin X."/>
            <person name="Liu S.X."/>
            <person name="Liu Z.A."/>
            <person name="Luros J.S."/>
            <person name="Maiti R."/>
            <person name="Marziali A."/>
            <person name="Militscher J."/>
            <person name="Miranda M."/>
            <person name="Nguyen M."/>
            <person name="Nierman W.C."/>
            <person name="Osborne B.I."/>
            <person name="Pai G."/>
            <person name="Peterson J."/>
            <person name="Pham P.K."/>
            <person name="Rizzo M."/>
            <person name="Rooney T."/>
            <person name="Rowley D."/>
            <person name="Sakano H."/>
            <person name="Salzberg S.L."/>
            <person name="Schwartz J.R."/>
            <person name="Shinn P."/>
            <person name="Southwick A.M."/>
            <person name="Sun H."/>
            <person name="Tallon L.J."/>
            <person name="Tambunga G."/>
            <person name="Toriumi M.J."/>
            <person name="Town C.D."/>
            <person name="Utterback T."/>
            <person name="Van Aken S."/>
            <person name="Vaysberg M."/>
            <person name="Vysotskaia V.S."/>
            <person name="Walker M."/>
            <person name="Wu D."/>
            <person name="Yu G."/>
            <person name="Fraser C.M."/>
            <person name="Venter J.C."/>
            <person name="Davis R.W."/>
        </authorList>
    </citation>
    <scope>NUCLEOTIDE SEQUENCE [LARGE SCALE GENOMIC DNA]</scope>
    <source>
        <strain>cv. Columbia</strain>
    </source>
</reference>
<reference key="2">
    <citation type="journal article" date="2017" name="Plant J.">
        <title>Araport11: a complete reannotation of the Arabidopsis thaliana reference genome.</title>
        <authorList>
            <person name="Cheng C.Y."/>
            <person name="Krishnakumar V."/>
            <person name="Chan A.P."/>
            <person name="Thibaud-Nissen F."/>
            <person name="Schobel S."/>
            <person name="Town C.D."/>
        </authorList>
    </citation>
    <scope>GENOME REANNOTATION</scope>
    <source>
        <strain>cv. Columbia</strain>
    </source>
</reference>
<reference key="3">
    <citation type="submission" date="2005-05" db="EMBL/GenBank/DDBJ databases">
        <title>Arabidopsis cDNA clones.</title>
        <authorList>
            <person name="Shinn P."/>
            <person name="Chen H."/>
            <person name="Cheuk R.F."/>
            <person name="Kim C.J."/>
            <person name="Ecker J.R."/>
        </authorList>
    </citation>
    <scope>NUCLEOTIDE SEQUENCE [LARGE SCALE MRNA]</scope>
    <source>
        <strain>cv. Columbia</strain>
    </source>
</reference>
<reference key="4">
    <citation type="journal article" date="2003" name="J. Mol. Evol.">
        <title>The carboxylesterase gene family from Arabidopsis thaliana.</title>
        <authorList>
            <person name="Marshall S.D."/>
            <person name="Putterill J.J."/>
            <person name="Plummer K.M."/>
            <person name="Newcomb R.D."/>
        </authorList>
    </citation>
    <scope>TISSUE SPECIFICITY</scope>
    <scope>GENE FAMILY</scope>
    <scope>NOMENCLATURE</scope>
</reference>
<feature type="chain" id="PRO_0000402551" description="Probable carboxylesterase 5">
    <location>
        <begin position="1"/>
        <end position="319"/>
    </location>
</feature>
<feature type="short sequence motif" description="Involved in the stabilization of the negatively charged intermediate by the formation of the oxyanion hole" evidence="2">
    <location>
        <begin position="79"/>
        <end position="81"/>
    </location>
</feature>
<feature type="active site" evidence="2">
    <location>
        <position position="163"/>
    </location>
</feature>
<feature type="active site" evidence="2">
    <location>
        <position position="262"/>
    </location>
</feature>
<feature type="active site" evidence="2">
    <location>
        <position position="294"/>
    </location>
</feature>
<feature type="modified residue" description="N-acetylmethionine" evidence="3">
    <location>
        <position position="1"/>
    </location>
</feature>
<comment type="function">
    <text evidence="1">Carboxylesterase acting on esters with varying acyl chain length.</text>
</comment>
<comment type="catalytic activity">
    <reaction>
        <text>a carboxylic ester + H2O = an alcohol + a carboxylate + H(+)</text>
        <dbReference type="Rhea" id="RHEA:21164"/>
        <dbReference type="ChEBI" id="CHEBI:15377"/>
        <dbReference type="ChEBI" id="CHEBI:15378"/>
        <dbReference type="ChEBI" id="CHEBI:29067"/>
        <dbReference type="ChEBI" id="CHEBI:30879"/>
        <dbReference type="ChEBI" id="CHEBI:33308"/>
        <dbReference type="EC" id="3.1.1.1"/>
    </reaction>
</comment>
<comment type="tissue specificity">
    <text evidence="4">Expressed in roots, leaves, stems, flowers and siliques.</text>
</comment>
<comment type="similarity">
    <text evidence="5">Belongs to the 'GDXG' lipolytic enzyme family.</text>
</comment>
<accession>Q9FX94</accession>
<sequence>MESEIASEFLPFCRIYKDGRVERLIGTDTIPASLDPTYDVVSKDVIYSPENNLSVRLFLPHKSTKLTAGNKLPLLIYIHGGAWIIESPFSPLYHNYLTEVVKSANCLAVSVQYRRAPEDPVPAAYEDVWSAIQWIFAHSNGSGPVDWINKHADFGKVFLGGDSAGGNISHHMAMKAGKEKKLDLKIKGIAVVHPAFWGTDPVDEYDVQDKETRSGIAEIWEKIASPNSVNGTDDPLFNVNGSGSDFSGLGCDKVLVAVAGKDVFVRQGLAYAAKLEKCEWEGTVEVVEEEGEDHVFHLQNPKSDKALKFLKKFVEFIIG</sequence>
<evidence type="ECO:0000250" key="1"/>
<evidence type="ECO:0000250" key="2">
    <source>
        <dbReference type="UniProtKB" id="Q5NUF3"/>
    </source>
</evidence>
<evidence type="ECO:0000250" key="3">
    <source>
        <dbReference type="UniProtKB" id="Q9SMN0"/>
    </source>
</evidence>
<evidence type="ECO:0000269" key="4">
    <source>
    </source>
</evidence>
<evidence type="ECO:0000305" key="5"/>
<organism>
    <name type="scientific">Arabidopsis thaliana</name>
    <name type="common">Mouse-ear cress</name>
    <dbReference type="NCBI Taxonomy" id="3702"/>
    <lineage>
        <taxon>Eukaryota</taxon>
        <taxon>Viridiplantae</taxon>
        <taxon>Streptophyta</taxon>
        <taxon>Embryophyta</taxon>
        <taxon>Tracheophyta</taxon>
        <taxon>Spermatophyta</taxon>
        <taxon>Magnoliopsida</taxon>
        <taxon>eudicotyledons</taxon>
        <taxon>Gunneridae</taxon>
        <taxon>Pentapetalae</taxon>
        <taxon>rosids</taxon>
        <taxon>malvids</taxon>
        <taxon>Brassicales</taxon>
        <taxon>Brassicaceae</taxon>
        <taxon>Camelineae</taxon>
        <taxon>Arabidopsis</taxon>
    </lineage>
</organism>
<proteinExistence type="evidence at transcript level"/>